<organism>
    <name type="scientific">Pongo abelii</name>
    <name type="common">Sumatran orangutan</name>
    <name type="synonym">Pongo pygmaeus abelii</name>
    <dbReference type="NCBI Taxonomy" id="9601"/>
    <lineage>
        <taxon>Eukaryota</taxon>
        <taxon>Metazoa</taxon>
        <taxon>Chordata</taxon>
        <taxon>Craniata</taxon>
        <taxon>Vertebrata</taxon>
        <taxon>Euteleostomi</taxon>
        <taxon>Mammalia</taxon>
        <taxon>Eutheria</taxon>
        <taxon>Euarchontoglires</taxon>
        <taxon>Primates</taxon>
        <taxon>Haplorrhini</taxon>
        <taxon>Catarrhini</taxon>
        <taxon>Hominidae</taxon>
        <taxon>Pongo</taxon>
    </lineage>
</organism>
<protein>
    <recommendedName>
        <fullName>Cysteine and histidine-rich domain-containing protein 1</fullName>
    </recommendedName>
    <alternativeName>
        <fullName>CHORD domain-containing protein 1</fullName>
        <shortName>CHP-1</shortName>
    </alternativeName>
    <alternativeName>
        <fullName>Protein morgana</fullName>
    </alternativeName>
</protein>
<dbReference type="EMBL" id="CR858025">
    <property type="protein sequence ID" value="CAH90266.1"/>
    <property type="molecule type" value="mRNA"/>
</dbReference>
<dbReference type="RefSeq" id="NP_001125118.1">
    <property type="nucleotide sequence ID" value="NM_001131646.2"/>
</dbReference>
<dbReference type="SMR" id="Q5RD91"/>
<dbReference type="STRING" id="9601.ENSPPYP00000004308"/>
<dbReference type="GeneID" id="100172001"/>
<dbReference type="KEGG" id="pon:100172001"/>
<dbReference type="CTD" id="26973"/>
<dbReference type="eggNOG" id="KOG1667">
    <property type="taxonomic scope" value="Eukaryota"/>
</dbReference>
<dbReference type="InParanoid" id="Q5RD91"/>
<dbReference type="OrthoDB" id="10261079at2759"/>
<dbReference type="Proteomes" id="UP000001595">
    <property type="component" value="Unplaced"/>
</dbReference>
<dbReference type="GO" id="GO:0046872">
    <property type="term" value="F:metal ion binding"/>
    <property type="evidence" value="ECO:0007669"/>
    <property type="project" value="UniProtKB-KW"/>
</dbReference>
<dbReference type="GO" id="GO:0061077">
    <property type="term" value="P:chaperone-mediated protein folding"/>
    <property type="evidence" value="ECO:0000250"/>
    <property type="project" value="UniProtKB"/>
</dbReference>
<dbReference type="GO" id="GO:1900034">
    <property type="term" value="P:regulation of cellular response to heat"/>
    <property type="evidence" value="ECO:0000250"/>
    <property type="project" value="UniProtKB"/>
</dbReference>
<dbReference type="GO" id="GO:0010824">
    <property type="term" value="P:regulation of centrosome duplication"/>
    <property type="evidence" value="ECO:0000250"/>
    <property type="project" value="UniProtKB"/>
</dbReference>
<dbReference type="CDD" id="cd06488">
    <property type="entry name" value="p23_melusin_like"/>
    <property type="match status" value="1"/>
</dbReference>
<dbReference type="FunFam" id="2.60.40.790:FF:000017">
    <property type="entry name" value="Cysteine and histidine-rich domain-containing protein 1"/>
    <property type="match status" value="1"/>
</dbReference>
<dbReference type="FunFam" id="4.10.1130.20:FF:000001">
    <property type="entry name" value="Cysteine and histidine-rich domain-containing protein 1"/>
    <property type="match status" value="1"/>
</dbReference>
<dbReference type="FunFam" id="4.10.1130.20:FF:000002">
    <property type="entry name" value="cysteine and histidine-rich domain-containing protein 1"/>
    <property type="match status" value="1"/>
</dbReference>
<dbReference type="Gene3D" id="2.60.40.790">
    <property type="match status" value="1"/>
</dbReference>
<dbReference type="Gene3D" id="4.10.1130.20">
    <property type="match status" value="2"/>
</dbReference>
<dbReference type="InterPro" id="IPR007051">
    <property type="entry name" value="CHORD_dom"/>
</dbReference>
<dbReference type="InterPro" id="IPR039790">
    <property type="entry name" value="CHRD1"/>
</dbReference>
<dbReference type="InterPro" id="IPR007052">
    <property type="entry name" value="CS_dom"/>
</dbReference>
<dbReference type="InterPro" id="IPR008978">
    <property type="entry name" value="HSP20-like_chaperone"/>
</dbReference>
<dbReference type="PANTHER" id="PTHR46983">
    <property type="entry name" value="CYSTEINE AND HISTIDINE-RICH DOMAIN-CONTAINING PROTEIN 1"/>
    <property type="match status" value="1"/>
</dbReference>
<dbReference type="PANTHER" id="PTHR46983:SF4">
    <property type="entry name" value="CYSTEINE AND HISTIDINE-RICH DOMAIN-CONTAINING PROTEIN 1"/>
    <property type="match status" value="1"/>
</dbReference>
<dbReference type="Pfam" id="PF04968">
    <property type="entry name" value="CHORD"/>
    <property type="match status" value="2"/>
</dbReference>
<dbReference type="Pfam" id="PF04969">
    <property type="entry name" value="CS"/>
    <property type="match status" value="1"/>
</dbReference>
<dbReference type="SUPFAM" id="SSF49764">
    <property type="entry name" value="HSP20-like chaperones"/>
    <property type="match status" value="1"/>
</dbReference>
<dbReference type="PROSITE" id="PS51401">
    <property type="entry name" value="CHORD"/>
    <property type="match status" value="2"/>
</dbReference>
<dbReference type="PROSITE" id="PS51203">
    <property type="entry name" value="CS"/>
    <property type="match status" value="1"/>
</dbReference>
<name>CHRD1_PONAB</name>
<accession>Q5RD91</accession>
<evidence type="ECO:0000250" key="1"/>
<evidence type="ECO:0000250" key="2">
    <source>
        <dbReference type="UniProtKB" id="Q9UHD1"/>
    </source>
</evidence>
<evidence type="ECO:0000255" key="3">
    <source>
        <dbReference type="PROSITE-ProRule" id="PRU00547"/>
    </source>
</evidence>
<evidence type="ECO:0000255" key="4">
    <source>
        <dbReference type="PROSITE-ProRule" id="PRU00734"/>
    </source>
</evidence>
<evidence type="ECO:0000256" key="5">
    <source>
        <dbReference type="SAM" id="MobiDB-lite"/>
    </source>
</evidence>
<comment type="function">
    <text evidence="1 2">Regulates centrosome duplication, probably by inhibiting the kinase activity of ROCK2. Proposed to act as co-chaperone for HSP90. May play a role in the regulation of NOD1 via a HSP90 chaperone complex. In vitro, has intrinsic chaperone activity. This function may be achieved by inhibiting association of ROCK2 with NPM1. Plays a role in ensuring the localization of the tyrosine kinase receptor EGFR to the plasma membrane, and thus ensures the subsequent regulation of EGFR activity and EGF-induced actin cytoskeleton remodeling (By similarity). Involved in stress response. Prevents tumorigenesis (By similarity).</text>
</comment>
<comment type="subunit">
    <text evidence="1">Interacts with HSP90AA1, HSP90AB1, PPP5C, ROCK1 and ROCK2.</text>
</comment>
<proteinExistence type="evidence at transcript level"/>
<feature type="initiator methionine" description="Removed" evidence="2">
    <location>
        <position position="1"/>
    </location>
</feature>
<feature type="chain" id="PRO_0000317772" description="Cysteine and histidine-rich domain-containing protein 1">
    <location>
        <begin position="2"/>
        <end position="332"/>
    </location>
</feature>
<feature type="domain" description="CHORD 1" evidence="4">
    <location>
        <begin position="5"/>
        <end position="64"/>
    </location>
</feature>
<feature type="domain" description="CHORD 2" evidence="4">
    <location>
        <begin position="157"/>
        <end position="216"/>
    </location>
</feature>
<feature type="domain" description="CS" evidence="3">
    <location>
        <begin position="227"/>
        <end position="316"/>
    </location>
</feature>
<feature type="region of interest" description="Interaction with PPP5C" evidence="1">
    <location>
        <begin position="2"/>
        <end position="77"/>
    </location>
</feature>
<feature type="region of interest" description="Disordered" evidence="5">
    <location>
        <begin position="62"/>
        <end position="81"/>
    </location>
</feature>
<feature type="region of interest" description="Interaction with HSP90AA1 and HSP90AB1" evidence="1">
    <location>
        <begin position="65"/>
        <end position="316"/>
    </location>
</feature>
<feature type="compositionally biased region" description="Basic and acidic residues" evidence="5">
    <location>
        <begin position="64"/>
        <end position="81"/>
    </location>
</feature>
<feature type="binding site" evidence="4">
    <location>
        <position position="5"/>
    </location>
    <ligand>
        <name>Zn(2+)</name>
        <dbReference type="ChEBI" id="CHEBI:29105"/>
        <label>1</label>
    </ligand>
</feature>
<feature type="binding site" evidence="4">
    <location>
        <position position="10"/>
    </location>
    <ligand>
        <name>Zn(2+)</name>
        <dbReference type="ChEBI" id="CHEBI:29105"/>
        <label>1</label>
    </ligand>
</feature>
<feature type="binding site" evidence="4">
    <location>
        <position position="24"/>
    </location>
    <ligand>
        <name>Zn(2+)</name>
        <dbReference type="ChEBI" id="CHEBI:29105"/>
        <label>1</label>
    </ligand>
</feature>
<feature type="binding site" evidence="4">
    <location>
        <position position="27"/>
    </location>
    <ligand>
        <name>Zn(2+)</name>
        <dbReference type="ChEBI" id="CHEBI:29105"/>
        <label>2</label>
    </ligand>
</feature>
<feature type="binding site" evidence="4">
    <location>
        <position position="42"/>
    </location>
    <ligand>
        <name>Zn(2+)</name>
        <dbReference type="ChEBI" id="CHEBI:29105"/>
        <label>2</label>
    </ligand>
</feature>
<feature type="binding site" evidence="4">
    <location>
        <position position="43"/>
    </location>
    <ligand>
        <name>Zn(2+)</name>
        <dbReference type="ChEBI" id="CHEBI:29105"/>
        <label>2</label>
    </ligand>
</feature>
<feature type="binding site" evidence="4">
    <location>
        <position position="59"/>
    </location>
    <ligand>
        <name>Zn(2+)</name>
        <dbReference type="ChEBI" id="CHEBI:29105"/>
        <label>2</label>
    </ligand>
</feature>
<feature type="binding site" evidence="4">
    <location>
        <position position="64"/>
    </location>
    <ligand>
        <name>Zn(2+)</name>
        <dbReference type="ChEBI" id="CHEBI:29105"/>
        <label>1</label>
    </ligand>
</feature>
<feature type="binding site" evidence="4">
    <location>
        <position position="157"/>
    </location>
    <ligand>
        <name>Zn(2+)</name>
        <dbReference type="ChEBI" id="CHEBI:29105"/>
        <label>3</label>
    </ligand>
</feature>
<feature type="binding site" evidence="4">
    <location>
        <position position="162"/>
    </location>
    <ligand>
        <name>Zn(2+)</name>
        <dbReference type="ChEBI" id="CHEBI:29105"/>
        <label>3</label>
    </ligand>
</feature>
<feature type="binding site" evidence="4">
    <location>
        <position position="176"/>
    </location>
    <ligand>
        <name>Zn(2+)</name>
        <dbReference type="ChEBI" id="CHEBI:29105"/>
        <label>3</label>
    </ligand>
</feature>
<feature type="binding site" evidence="4">
    <location>
        <position position="179"/>
    </location>
    <ligand>
        <name>Zn(2+)</name>
        <dbReference type="ChEBI" id="CHEBI:29105"/>
        <label>4</label>
    </ligand>
</feature>
<feature type="binding site" evidence="4">
    <location>
        <position position="194"/>
    </location>
    <ligand>
        <name>Zn(2+)</name>
        <dbReference type="ChEBI" id="CHEBI:29105"/>
        <label>4</label>
    </ligand>
</feature>
<feature type="binding site" evidence="4">
    <location>
        <position position="195"/>
    </location>
    <ligand>
        <name>Zn(2+)</name>
        <dbReference type="ChEBI" id="CHEBI:29105"/>
        <label>4</label>
    </ligand>
</feature>
<feature type="binding site" evidence="4">
    <location>
        <position position="211"/>
    </location>
    <ligand>
        <name>Zn(2+)</name>
        <dbReference type="ChEBI" id="CHEBI:29105"/>
        <label>4</label>
    </ligand>
</feature>
<feature type="binding site" evidence="4">
    <location>
        <position position="216"/>
    </location>
    <ligand>
        <name>Zn(2+)</name>
        <dbReference type="ChEBI" id="CHEBI:29105"/>
        <label>3</label>
    </ligand>
</feature>
<feature type="modified residue" description="N-acetylalanine" evidence="2">
    <location>
        <position position="2"/>
    </location>
</feature>
<feature type="modified residue" description="Phosphothreonine" evidence="2">
    <location>
        <position position="47"/>
    </location>
</feature>
<feature type="modified residue" description="Phosphoserine" evidence="2">
    <location>
        <position position="51"/>
    </location>
</feature>
<gene>
    <name type="primary">CHORDC1</name>
</gene>
<reference key="1">
    <citation type="submission" date="2004-11" db="EMBL/GenBank/DDBJ databases">
        <authorList>
            <consortium name="The German cDNA consortium"/>
        </authorList>
    </citation>
    <scope>NUCLEOTIDE SEQUENCE [LARGE SCALE MRNA]</scope>
    <source>
        <tissue>Kidney</tissue>
    </source>
</reference>
<keyword id="KW-0007">Acetylation</keyword>
<keyword id="KW-0143">Chaperone</keyword>
<keyword id="KW-0479">Metal-binding</keyword>
<keyword id="KW-0597">Phosphoprotein</keyword>
<keyword id="KW-1185">Reference proteome</keyword>
<keyword id="KW-0677">Repeat</keyword>
<keyword id="KW-0346">Stress response</keyword>
<keyword id="KW-0862">Zinc</keyword>
<sequence>MALLCYNRGCGQRFDPETNSDDACTYHPGVPVFHDALKGWSCCKRRTTDFSDFLSIVGCTKGRHNSEKPPESVKPEVKTTEKKELSELKPKFQEHIIQAPKPVEAIKRPSPDEPMTNLELKISASLKQALDKLKLSSGNEENKKEEDNDEIKIGTSCKNGGCSKTYRGLESLEEVCVYHSGVPISHEGMKYWSCCRRKTSDFNTFLAQEGCTKGKHMWTKKDAGKKVVPCRHDWHQTGGEVTISVYAKNSLPELSRVEANSTLLNVHIVFEGEKEFEQNVKLWGVIDVKRSYVTMTATKIEITMRKAEPMQWASLELPAAKKQEKQKDDTTD</sequence>